<reference key="1">
    <citation type="journal article" date="2007" name="PLoS ONE">
        <title>Complete genomic characterization of a pathogenic A.II strain of Francisella tularensis subspecies tularensis.</title>
        <authorList>
            <person name="Beckstrom-Sternberg S.M."/>
            <person name="Auerbach R.K."/>
            <person name="Godbole S."/>
            <person name="Pearson J.V."/>
            <person name="Beckstrom-Sternberg J.S."/>
            <person name="Deng Z."/>
            <person name="Munk C."/>
            <person name="Kubota K."/>
            <person name="Zhou Y."/>
            <person name="Bruce D."/>
            <person name="Noronha J."/>
            <person name="Scheuermann R.H."/>
            <person name="Wang A."/>
            <person name="Wei X."/>
            <person name="Wang J."/>
            <person name="Hao J."/>
            <person name="Wagner D.M."/>
            <person name="Brettin T.S."/>
            <person name="Brown N."/>
            <person name="Gilna P."/>
            <person name="Keim P.S."/>
        </authorList>
    </citation>
    <scope>NUCLEOTIDE SEQUENCE [LARGE SCALE GENOMIC DNA]</scope>
    <source>
        <strain>WY96-3418</strain>
    </source>
</reference>
<name>RL7_FRATW</name>
<feature type="chain" id="PRO_1000007011" description="Large ribosomal subunit protein bL12">
    <location>
        <begin position="1"/>
        <end position="125"/>
    </location>
</feature>
<dbReference type="EMBL" id="CP000608">
    <property type="protein sequence ID" value="ABO46200.1"/>
    <property type="molecule type" value="Genomic_DNA"/>
</dbReference>
<dbReference type="RefSeq" id="WP_003024808.1">
    <property type="nucleotide sequence ID" value="NC_009257.1"/>
</dbReference>
<dbReference type="SMR" id="A4IW98"/>
<dbReference type="GeneID" id="75264699"/>
<dbReference type="KEGG" id="ftw:FTW_0233"/>
<dbReference type="HOGENOM" id="CLU_086499_3_2_6"/>
<dbReference type="GO" id="GO:0022625">
    <property type="term" value="C:cytosolic large ribosomal subunit"/>
    <property type="evidence" value="ECO:0007669"/>
    <property type="project" value="TreeGrafter"/>
</dbReference>
<dbReference type="GO" id="GO:0003729">
    <property type="term" value="F:mRNA binding"/>
    <property type="evidence" value="ECO:0007669"/>
    <property type="project" value="TreeGrafter"/>
</dbReference>
<dbReference type="GO" id="GO:0003735">
    <property type="term" value="F:structural constituent of ribosome"/>
    <property type="evidence" value="ECO:0007669"/>
    <property type="project" value="InterPro"/>
</dbReference>
<dbReference type="GO" id="GO:0006412">
    <property type="term" value="P:translation"/>
    <property type="evidence" value="ECO:0007669"/>
    <property type="project" value="UniProtKB-UniRule"/>
</dbReference>
<dbReference type="CDD" id="cd00387">
    <property type="entry name" value="Ribosomal_L7_L12"/>
    <property type="match status" value="1"/>
</dbReference>
<dbReference type="FunFam" id="3.30.1390.10:FF:000001">
    <property type="entry name" value="50S ribosomal protein L7/L12"/>
    <property type="match status" value="1"/>
</dbReference>
<dbReference type="Gene3D" id="3.30.1390.10">
    <property type="match status" value="1"/>
</dbReference>
<dbReference type="Gene3D" id="1.20.5.710">
    <property type="entry name" value="Single helix bin"/>
    <property type="match status" value="1"/>
</dbReference>
<dbReference type="HAMAP" id="MF_00368">
    <property type="entry name" value="Ribosomal_bL12"/>
    <property type="match status" value="1"/>
</dbReference>
<dbReference type="InterPro" id="IPR000206">
    <property type="entry name" value="Ribosomal_bL12"/>
</dbReference>
<dbReference type="InterPro" id="IPR013823">
    <property type="entry name" value="Ribosomal_bL12_C"/>
</dbReference>
<dbReference type="InterPro" id="IPR014719">
    <property type="entry name" value="Ribosomal_bL12_C/ClpS-like"/>
</dbReference>
<dbReference type="InterPro" id="IPR008932">
    <property type="entry name" value="Ribosomal_bL12_oligo"/>
</dbReference>
<dbReference type="InterPro" id="IPR036235">
    <property type="entry name" value="Ribosomal_bL12_oligo_N_sf"/>
</dbReference>
<dbReference type="NCBIfam" id="TIGR00855">
    <property type="entry name" value="L12"/>
    <property type="match status" value="1"/>
</dbReference>
<dbReference type="PANTHER" id="PTHR45987">
    <property type="entry name" value="39S RIBOSOMAL PROTEIN L12"/>
    <property type="match status" value="1"/>
</dbReference>
<dbReference type="PANTHER" id="PTHR45987:SF4">
    <property type="entry name" value="LARGE RIBOSOMAL SUBUNIT PROTEIN BL12M"/>
    <property type="match status" value="1"/>
</dbReference>
<dbReference type="Pfam" id="PF00542">
    <property type="entry name" value="Ribosomal_L12"/>
    <property type="match status" value="1"/>
</dbReference>
<dbReference type="Pfam" id="PF16320">
    <property type="entry name" value="Ribosomal_L12_N"/>
    <property type="match status" value="1"/>
</dbReference>
<dbReference type="SUPFAM" id="SSF54736">
    <property type="entry name" value="ClpS-like"/>
    <property type="match status" value="1"/>
</dbReference>
<dbReference type="SUPFAM" id="SSF48300">
    <property type="entry name" value="Ribosomal protein L7/12, oligomerisation (N-terminal) domain"/>
    <property type="match status" value="1"/>
</dbReference>
<sequence length="125" mass="12820">MAITKEDILNAVAEMSVMDVCDLVKMMEDKFGVSAAAAVAVAAGPVAGPAEAAEEKTEFDVVLVDAGSNKIAAIKAVRGATGLGLKEAKDAVEGTPFTVKEAASKEEAEALKKQLEEAGAKVELK</sequence>
<proteinExistence type="inferred from homology"/>
<gene>
    <name evidence="1" type="primary">rplL</name>
    <name type="ordered locus">FTW_0233</name>
</gene>
<evidence type="ECO:0000255" key="1">
    <source>
        <dbReference type="HAMAP-Rule" id="MF_00368"/>
    </source>
</evidence>
<evidence type="ECO:0000305" key="2"/>
<protein>
    <recommendedName>
        <fullName evidence="1">Large ribosomal subunit protein bL12</fullName>
    </recommendedName>
    <alternativeName>
        <fullName evidence="2">50S ribosomal protein L7/L12</fullName>
    </alternativeName>
</protein>
<comment type="function">
    <text evidence="1">Forms part of the ribosomal stalk which helps the ribosome interact with GTP-bound translation factors. Is thus essential for accurate translation.</text>
</comment>
<comment type="subunit">
    <text evidence="1">Homodimer. Part of the ribosomal stalk of the 50S ribosomal subunit. Forms a multimeric L10(L12)X complex, where L10 forms an elongated spine to which 2 to 4 L12 dimers bind in a sequential fashion. Binds GTP-bound translation factors.</text>
</comment>
<comment type="similarity">
    <text evidence="1">Belongs to the bacterial ribosomal protein bL12 family.</text>
</comment>
<accession>A4IW98</accession>
<organism>
    <name type="scientific">Francisella tularensis subsp. tularensis (strain WY96-3418)</name>
    <dbReference type="NCBI Taxonomy" id="418136"/>
    <lineage>
        <taxon>Bacteria</taxon>
        <taxon>Pseudomonadati</taxon>
        <taxon>Pseudomonadota</taxon>
        <taxon>Gammaproteobacteria</taxon>
        <taxon>Thiotrichales</taxon>
        <taxon>Francisellaceae</taxon>
        <taxon>Francisella</taxon>
    </lineage>
</organism>
<keyword id="KW-0687">Ribonucleoprotein</keyword>
<keyword id="KW-0689">Ribosomal protein</keyword>